<keyword id="KW-0025">Alternative splicing</keyword>
<keyword id="KW-0112">Calmodulin-binding</keyword>
<keyword id="KW-0963">Cytoplasm</keyword>
<keyword id="KW-0407">Ion channel</keyword>
<keyword id="KW-0406">Ion transport</keyword>
<keyword id="KW-0472">Membrane</keyword>
<keyword id="KW-1185">Reference proteome</keyword>
<keyword id="KW-0812">Transmembrane</keyword>
<keyword id="KW-1133">Transmembrane helix</keyword>
<keyword id="KW-0813">Transport</keyword>
<organism>
    <name type="scientific">Mus musculus</name>
    <name type="common">Mouse</name>
    <dbReference type="NCBI Taxonomy" id="10090"/>
    <lineage>
        <taxon>Eukaryota</taxon>
        <taxon>Metazoa</taxon>
        <taxon>Chordata</taxon>
        <taxon>Craniata</taxon>
        <taxon>Vertebrata</taxon>
        <taxon>Euteleostomi</taxon>
        <taxon>Mammalia</taxon>
        <taxon>Eutheria</taxon>
        <taxon>Euarchontoglires</taxon>
        <taxon>Glires</taxon>
        <taxon>Rodentia</taxon>
        <taxon>Myomorpha</taxon>
        <taxon>Muroidea</taxon>
        <taxon>Muridae</taxon>
        <taxon>Murinae</taxon>
        <taxon>Mus</taxon>
        <taxon>Mus</taxon>
    </lineage>
</organism>
<gene>
    <name evidence="14" type="primary">Kcnn1</name>
    <name type="synonym">Sk1</name>
</gene>
<comment type="function">
    <text evidence="3 6 7 13">Small conductance calcium-activated potassium channel that mediates the voltage-independent transmembrane transfer of potassium across the cell membrane through a constitutive interaction with calmodulin which binds the intracellular calcium allowing its opening (PubMed:11267657, PubMed:11557517). The current is characterized by a voltage-independent activation, an intracellular calcium concentration increase-dependent activation and a single-channel conductance of about 3 picosiemens (PubMed:11557517). Also presents an inwardly rectifying current, thus reducing its already small outward conductance of potassium ions, which is particularly the case when the membrane potential displays positive values, above + 20 mV (By similarity). Activation is followed by membrane hyperpolarization (PubMed:11557517). Thought to regulate neuronal excitability by contributing to the slow component of synaptic afterhyperpolarization (Probable).</text>
</comment>
<comment type="catalytic activity">
    <reaction evidence="7">
        <text>K(+)(in) = K(+)(out)</text>
        <dbReference type="Rhea" id="RHEA:29463"/>
        <dbReference type="ChEBI" id="CHEBI:29103"/>
    </reaction>
</comment>
<comment type="activity regulation">
    <text evidence="3">Inhibited by bee venom neurotoxin apamin. Inhibited by d-tubocurarine and tetraethylammonium (TEA).</text>
</comment>
<comment type="subunit">
    <text evidence="2 6 10">Homodimer (PubMed:20689065). Heteromultimer with KCNN2 and KCNN3 (PubMed:20689065). The complex is composed of 4 channel subunits each of which binds to a calmodulin subunit which regulates the channel activity through calcium-binding (By similarity). Interacts with calmodulin (PubMed:11267657).</text>
</comment>
<comment type="subcellular location">
    <subcellularLocation>
        <location evidence="4">Membrane</location>
        <topology evidence="4">Multi-pass membrane protein</topology>
    </subcellularLocation>
    <subcellularLocation>
        <location evidence="10">Cytoplasm</location>
        <location evidence="10">Myofibril</location>
        <location evidence="10">Sarcomere</location>
        <location evidence="10">Z line</location>
    </subcellularLocation>
</comment>
<comment type="alternative products">
    <event type="alternative splicing"/>
    <isoform>
        <id>Q9EQR3-1</id>
        <name>1</name>
        <sequence type="displayed"/>
    </isoform>
    <isoform>
        <id>Q9EQR3-2</id>
        <name>2</name>
        <name>I</name>
        <sequence type="described" ref="VSP_002809"/>
    </isoform>
    <isoform>
        <id>Q9EQR3-3</id>
        <name>3</name>
        <name>V</name>
        <sequence type="described" ref="VSP_002810"/>
    </isoform>
    <isoform>
        <id>Q9EQR3-4</id>
        <name>4</name>
        <name>VI</name>
        <sequence type="described" ref="VSP_002810 VSP_002813"/>
    </isoform>
    <isoform>
        <id>Q9EQR3-5</id>
        <name>5</name>
        <name>VII</name>
        <sequence type="described" ref="VSP_002810 VSP_002811"/>
    </isoform>
    <isoform>
        <id>Q9EQR3-6</id>
        <name>6</name>
        <name>VIII</name>
        <sequence type="described" ref="VSP_002810 VSP_002812"/>
    </isoform>
    <isoform>
        <id>Q9EQR3-7</id>
        <name>7</name>
        <name>IV</name>
        <sequence type="described" ref="VSP_002812"/>
    </isoform>
    <isoform>
        <id>Q9EQR3-8</id>
        <name>8</name>
        <name>III</name>
        <sequence type="described" ref="VSP_002811"/>
    </isoform>
    <isoform>
        <id>Q9EQR3-9</id>
        <name>9</name>
        <name>II</name>
        <sequence type="described" ref="VSP_002813"/>
    </isoform>
    <text>At least 16 isoforms may be produced by combinatorial splicing of the N-terminal exon 3.1 and the C-terminal exons 7, 8a and 9. Experimental confirmation may be lacking for some isoforms.</text>
</comment>
<comment type="tissue specificity">
    <text evidence="7 9 10">Highest expression in brain and liver with lower levels in heart, testis, kidney and colon (PubMed:11557517). In colon, detected in smooth muscle cells (PubMed:11557517). Expressed in atrial and ventricular myocytes with higher levels in atrial myocytes (PubMed:16055520, PubMed:20689065).</text>
</comment>
<comment type="domain">
    <text evidence="3">The coiled-coil domaim mediates heteromeic assembly.</text>
</comment>
<comment type="polymorphism">
    <text evidence="6">The poly-Glu region of KCNN1 is polymorphic and the number of Glu varies between strains (from 10 to 12) (PubMed:11267657). The repeat with 10 Glu residues (shown here) is found in BALB/c, DBA/2J, 129/SvJ, A/J, C3H/HeJ, BALB/cJ, BXD-31, SM/J, ST/BJ, FVB/NJ, NZB/B1NJ, CBA/J and CAST/Ei (PubMed:11267657).</text>
</comment>
<comment type="miscellaneous">
    <molecule>Isoform 1</molecule>
    <text>Produced by alternative splicing events in which various combinations of the four 5' non-coding exons A, B1, B2 or C are joined directly to exon 3.2.</text>
</comment>
<comment type="miscellaneous">
    <molecule>Isoform 3</molecule>
    <text evidence="12">Reduced calmodulin-binding.</text>
</comment>
<comment type="miscellaneous">
    <molecule>Isoform 4</molecule>
    <text evidence="12">Reduced calmodulin-binding.</text>
</comment>
<comment type="miscellaneous">
    <molecule>Isoform 5</molecule>
    <text evidence="12">Reduced calmodulin-binding.</text>
</comment>
<comment type="miscellaneous">
    <molecule>Isoform 6</molecule>
    <text evidence="12">Reduced calmodulin-binding.</text>
</comment>
<comment type="miscellaneous">
    <molecule>Isoform 7</molecule>
    <text evidence="12">Reduced calmodulin-binding.</text>
</comment>
<comment type="miscellaneous">
    <molecule>Isoform 8</molecule>
    <text evidence="12">Reduced calmodulin-binding.</text>
</comment>
<comment type="similarity">
    <text evidence="12">Belongs to the potassium channel KCNN family. KCa2.1/KCNN1 subfamily.</text>
</comment>
<accession>Q9EQR3</accession>
<accession>Q5CZY7</accession>
<accession>Q6JXY1</accession>
<accession>Q99JA9</accession>
<name>KCNN1_MOUSE</name>
<feature type="chain" id="PRO_0000155008" description="Small conductance calcium-activated potassium channel protein 1">
    <location>
        <begin position="1"/>
        <end position="537"/>
    </location>
</feature>
<feature type="transmembrane region" description="Helical; Name=Segment S1" evidence="4">
    <location>
        <begin position="108"/>
        <end position="128"/>
    </location>
</feature>
<feature type="transmembrane region" description="Helical; Name=Segment S2" evidence="4">
    <location>
        <begin position="137"/>
        <end position="157"/>
    </location>
</feature>
<feature type="transmembrane region" description="Helical; Name=Segment S3" evidence="4">
    <location>
        <begin position="176"/>
        <end position="196"/>
    </location>
</feature>
<feature type="transmembrane region" description="Helical; Name=Segment S4" evidence="4">
    <location>
        <begin position="225"/>
        <end position="245"/>
    </location>
</feature>
<feature type="transmembrane region" description="Helical; Name=Segment S5" evidence="4">
    <location>
        <begin position="274"/>
        <end position="294"/>
    </location>
</feature>
<feature type="intramembrane region" description="Pore-forming; Name=Segment H5" evidence="4">
    <location>
        <begin position="314"/>
        <end position="334"/>
    </location>
</feature>
<feature type="region of interest" description="Disordered" evidence="5">
    <location>
        <begin position="1"/>
        <end position="90"/>
    </location>
</feature>
<feature type="region of interest" description="Segment S6" evidence="4">
    <location>
        <begin position="343"/>
        <end position="363"/>
    </location>
</feature>
<feature type="region of interest" description="Calmodulin-binding" evidence="1">
    <location>
        <begin position="381"/>
        <end position="460"/>
    </location>
</feature>
<feature type="compositionally biased region" description="Polar residues" evidence="5">
    <location>
        <begin position="1"/>
        <end position="10"/>
    </location>
</feature>
<feature type="compositionally biased region" description="Acidic residues" evidence="5">
    <location>
        <begin position="65"/>
        <end position="76"/>
    </location>
</feature>
<feature type="splice variant" id="VSP_002809" description="In isoform 2." evidence="11">
    <original>M</original>
    <variation>MFWNGQGDVQPLLSPQVHSEALLRNHAGPQRACCTPSPRRQVAM</variation>
    <location>
        <position position="1"/>
    </location>
</feature>
<feature type="splice variant" id="VSP_002810" description="In isoform 3, isoform 4, isoform 5 and isoform 6." evidence="12">
    <location>
        <begin position="351"/>
        <end position="387"/>
    </location>
</feature>
<feature type="splice variant" id="VSP_002811" description="In isoform 5 and isoform 8." evidence="12">
    <original>KFLQAIHQAQKLRSVKIEQGKVNDQANTLAELAKAQSIAYEVVSELQAQQEELEARLAALESRLDVLGASLQALPGLIAQAICPLPPPWPGPGHLATATHSPQSHWLPTMGSDCG</original>
    <variation>LRSSEV</variation>
    <location>
        <begin position="423"/>
        <end position="537"/>
    </location>
</feature>
<feature type="splice variant" id="VSP_002812" description="In isoform 6 and isoform 7." evidence="12">
    <original>KFLQAIHQAQKLRSVKIEQGKVNDQANTLAELAKAQSIAYEVVSELQAQQEELEARLAALESRLDVLGASLQALPGLIAQAICPLPPPWPGPGHLATATHSPQSHWLPTMGSDCG</original>
    <variation>SEV</variation>
    <location>
        <begin position="423"/>
        <end position="537"/>
    </location>
</feature>
<feature type="splice variant" id="VSP_002813" description="In isoform 4 and isoform 9." evidence="12">
    <location>
        <begin position="431"/>
        <end position="433"/>
    </location>
</feature>
<feature type="sequence variant" description="In strain: C57BL/6J, A/HeJ and SPRET/Ei." evidence="8">
    <original>E</original>
    <variation>EE</variation>
    <location>
        <position position="66"/>
    </location>
</feature>
<feature type="sequence variant" description="In strain: SWR/J, AKR/J, RBF/DNJ and P/J.">
    <original>E</original>
    <variation>EEE</variation>
    <location>
        <position position="66"/>
    </location>
</feature>
<feature type="sequence variant" description="In strain: C57BL/6J." evidence="8">
    <original>H</original>
    <variation>Q</variation>
    <location>
        <position position="522"/>
    </location>
</feature>
<proteinExistence type="evidence at protein level"/>
<evidence type="ECO:0000250" key="1"/>
<evidence type="ECO:0000250" key="2">
    <source>
        <dbReference type="UniProtKB" id="P70604"/>
    </source>
</evidence>
<evidence type="ECO:0000250" key="3">
    <source>
        <dbReference type="UniProtKB" id="Q92952"/>
    </source>
</evidence>
<evidence type="ECO:0000255" key="4"/>
<evidence type="ECO:0000256" key="5">
    <source>
        <dbReference type="SAM" id="MobiDB-lite"/>
    </source>
</evidence>
<evidence type="ECO:0000269" key="6">
    <source>
    </source>
</evidence>
<evidence type="ECO:0000269" key="7">
    <source>
    </source>
</evidence>
<evidence type="ECO:0000269" key="8">
    <source>
    </source>
</evidence>
<evidence type="ECO:0000269" key="9">
    <source>
    </source>
</evidence>
<evidence type="ECO:0000269" key="10">
    <source>
    </source>
</evidence>
<evidence type="ECO:0000303" key="11">
    <source>
    </source>
</evidence>
<evidence type="ECO:0000305" key="12"/>
<evidence type="ECO:0000305" key="13">
    <source>
    </source>
</evidence>
<evidence type="ECO:0000312" key="14">
    <source>
        <dbReference type="MGI" id="MGI:1933993"/>
    </source>
</evidence>
<sequence>MSSHSHNGSVGQPLGSGPGFLGWEPVDPEAGRPLQPTQGPGLQMVAKGQPVRLSPGGSRGHPQEQEEEEEEEEEEDKTGSGKPPTVSHRLGHRRALFEKRKRLSDYALIFGMFGIVVMVTETELSWGVYTKESLCSFALKCLISLSTVILLGLVILYHAREIQLFLVDNGADDWRIAMTWERVSLISLELVVCAIHPVPGHYRFTWTARLAFSLVPSAAEADLDVLLSIPMFLRLYLLARVMLLHSRIFTDASSRSIGALNRVTFNTRFVTKTLMTICPGTVLLVFSVSSWIVAAWTVRVCERYHDKQEVTSNFLGAMWLISITFLSIGYGDMVPHTYCGKGVCLLTGIMGAGCTALVVAVVARKLELTKAEKHVHNFMMDTQLTKRVKNAAANVLRETWLIYKHTRLVKKPDQGRVRKHQRKFLQAIHQAQKLRSVKIEQGKVNDQANTLAELAKAQSIAYEVVSELQAQQEELEARLAALESRLDVLGASLQALPGLIAQAICPLPPPWPGPGHLATATHSPQSHWLPTMGSDCG</sequence>
<dbReference type="EMBL" id="AF116525">
    <property type="protein sequence ID" value="AAG43216.1"/>
    <property type="molecule type" value="mRNA"/>
</dbReference>
<dbReference type="EMBL" id="AF297870">
    <property type="protein sequence ID" value="AAK30363.1"/>
    <property type="molecule type" value="Genomic_DNA"/>
</dbReference>
<dbReference type="EMBL" id="AF297869">
    <property type="protein sequence ID" value="AAK30363.1"/>
    <property type="status" value="JOINED"/>
    <property type="molecule type" value="Genomic_DNA"/>
</dbReference>
<dbReference type="EMBL" id="AF303461">
    <property type="protein sequence ID" value="AAK29550.1"/>
    <property type="molecule type" value="mRNA"/>
</dbReference>
<dbReference type="EMBL" id="AF303462">
    <property type="protein sequence ID" value="AAK29551.1"/>
    <property type="molecule type" value="mRNA"/>
</dbReference>
<dbReference type="EMBL" id="AF303463">
    <property type="protein sequence ID" value="AAK29552.1"/>
    <property type="molecule type" value="mRNA"/>
</dbReference>
<dbReference type="EMBL" id="AF357239">
    <property type="protein sequence ID" value="AAK48900.1"/>
    <property type="molecule type" value="mRNA"/>
</dbReference>
<dbReference type="EMBL" id="AY258143">
    <property type="protein sequence ID" value="AAP45948.1"/>
    <property type="molecule type" value="mRNA"/>
</dbReference>
<dbReference type="EMBL" id="BC090622">
    <property type="protein sequence ID" value="AAH90622.1"/>
    <property type="molecule type" value="mRNA"/>
</dbReference>
<dbReference type="RefSeq" id="NP_115773.2">
    <property type="nucleotide sequence ID" value="NM_032397.2"/>
</dbReference>
<dbReference type="RefSeq" id="XP_006509870.1">
    <property type="nucleotide sequence ID" value="XM_006509807.3"/>
</dbReference>
<dbReference type="RefSeq" id="XP_006509871.1">
    <property type="nucleotide sequence ID" value="XM_006509808.3"/>
</dbReference>
<dbReference type="SMR" id="Q9EQR3"/>
<dbReference type="BioGRID" id="219999">
    <property type="interactions" value="1"/>
</dbReference>
<dbReference type="FunCoup" id="Q9EQR3">
    <property type="interactions" value="109"/>
</dbReference>
<dbReference type="STRING" id="10090.ENSMUSP00000105705"/>
<dbReference type="TCDB" id="9.A.48.1.1">
    <property type="family name" value="the unconventional protein secretion (ups) system family"/>
</dbReference>
<dbReference type="GlyGen" id="Q9EQR3">
    <property type="glycosylation" value="1 site"/>
</dbReference>
<dbReference type="PhosphoSitePlus" id="Q9EQR3"/>
<dbReference type="jPOST" id="Q9EQR3"/>
<dbReference type="PaxDb" id="10090-ENSMUSP00000105708"/>
<dbReference type="PeptideAtlas" id="Q9EQR3"/>
<dbReference type="ProteomicsDB" id="269274">
    <molecule id="Q9EQR3-1"/>
</dbReference>
<dbReference type="ProteomicsDB" id="269275">
    <molecule id="Q9EQR3-2"/>
</dbReference>
<dbReference type="ProteomicsDB" id="269276">
    <molecule id="Q9EQR3-3"/>
</dbReference>
<dbReference type="ProteomicsDB" id="269277">
    <molecule id="Q9EQR3-4"/>
</dbReference>
<dbReference type="ProteomicsDB" id="269278">
    <molecule id="Q9EQR3-5"/>
</dbReference>
<dbReference type="ProteomicsDB" id="269279">
    <molecule id="Q9EQR3-6"/>
</dbReference>
<dbReference type="ProteomicsDB" id="269280">
    <molecule id="Q9EQR3-7"/>
</dbReference>
<dbReference type="ProteomicsDB" id="269281">
    <molecule id="Q9EQR3-8"/>
</dbReference>
<dbReference type="ProteomicsDB" id="269282">
    <molecule id="Q9EQR3-9"/>
</dbReference>
<dbReference type="DNASU" id="84036"/>
<dbReference type="GeneID" id="84036"/>
<dbReference type="KEGG" id="mmu:84036"/>
<dbReference type="UCSC" id="uc012gfj.1">
    <molecule id="Q9EQR3-2"/>
    <property type="organism name" value="mouse"/>
</dbReference>
<dbReference type="AGR" id="MGI:1933993"/>
<dbReference type="CTD" id="3780"/>
<dbReference type="MGI" id="MGI:1933993">
    <property type="gene designation" value="Kcnn1"/>
</dbReference>
<dbReference type="eggNOG" id="KOG3684">
    <property type="taxonomic scope" value="Eukaryota"/>
</dbReference>
<dbReference type="InParanoid" id="Q9EQR3"/>
<dbReference type="PhylomeDB" id="Q9EQR3"/>
<dbReference type="Reactome" id="R-MMU-1296052">
    <property type="pathway name" value="Ca2+ activated K+ channels"/>
</dbReference>
<dbReference type="BioGRID-ORCS" id="84036">
    <property type="hits" value="4 hits in 78 CRISPR screens"/>
</dbReference>
<dbReference type="ChiTaRS" id="Kcnn1">
    <property type="organism name" value="mouse"/>
</dbReference>
<dbReference type="PRO" id="PR:Q9EQR3"/>
<dbReference type="Proteomes" id="UP000000589">
    <property type="component" value="Unplaced"/>
</dbReference>
<dbReference type="RNAct" id="Q9EQR3">
    <property type="molecule type" value="protein"/>
</dbReference>
<dbReference type="GO" id="GO:0005737">
    <property type="term" value="C:cytoplasm"/>
    <property type="evidence" value="ECO:0000314"/>
    <property type="project" value="MGI"/>
</dbReference>
<dbReference type="GO" id="GO:0005886">
    <property type="term" value="C:plasma membrane"/>
    <property type="evidence" value="ECO:0000314"/>
    <property type="project" value="MGI"/>
</dbReference>
<dbReference type="GO" id="GO:0030018">
    <property type="term" value="C:Z disc"/>
    <property type="evidence" value="ECO:0007669"/>
    <property type="project" value="UniProtKB-SubCell"/>
</dbReference>
<dbReference type="GO" id="GO:0005516">
    <property type="term" value="F:calmodulin binding"/>
    <property type="evidence" value="ECO:0000314"/>
    <property type="project" value="MGI"/>
</dbReference>
<dbReference type="GO" id="GO:0016286">
    <property type="term" value="F:small conductance calcium-activated potassium channel activity"/>
    <property type="evidence" value="ECO:0000250"/>
    <property type="project" value="UniProtKB"/>
</dbReference>
<dbReference type="FunFam" id="1.10.287.70:FF:000022">
    <property type="entry name" value="Small conductance calcium-activated potassium channel, isoform O"/>
    <property type="match status" value="1"/>
</dbReference>
<dbReference type="FunFam" id="1.10.287.70:FF:000027">
    <property type="entry name" value="Small conductance calcium-activated potassium channel, isoform O"/>
    <property type="match status" value="1"/>
</dbReference>
<dbReference type="Gene3D" id="1.10.287.70">
    <property type="match status" value="2"/>
</dbReference>
<dbReference type="InterPro" id="IPR004178">
    <property type="entry name" value="CaM-bd_dom"/>
</dbReference>
<dbReference type="InterPro" id="IPR036122">
    <property type="entry name" value="CaM-bd_dom_sf"/>
</dbReference>
<dbReference type="InterPro" id="IPR015449">
    <property type="entry name" value="K_chnl_Ca-activ_SK"/>
</dbReference>
<dbReference type="InterPro" id="IPR013099">
    <property type="entry name" value="K_chnl_dom"/>
</dbReference>
<dbReference type="PANTHER" id="PTHR10153">
    <property type="entry name" value="SMALL CONDUCTANCE CALCIUM-ACTIVATED POTASSIUM CHANNEL"/>
    <property type="match status" value="1"/>
</dbReference>
<dbReference type="Pfam" id="PF02888">
    <property type="entry name" value="CaMBD"/>
    <property type="match status" value="1"/>
</dbReference>
<dbReference type="Pfam" id="PF07885">
    <property type="entry name" value="Ion_trans_2"/>
    <property type="match status" value="1"/>
</dbReference>
<dbReference type="Pfam" id="PF03530">
    <property type="entry name" value="SK_channel"/>
    <property type="match status" value="1"/>
</dbReference>
<dbReference type="PRINTS" id="PR01451">
    <property type="entry name" value="SKCHANNEL"/>
</dbReference>
<dbReference type="SMART" id="SM01053">
    <property type="entry name" value="CaMBD"/>
    <property type="match status" value="1"/>
</dbReference>
<dbReference type="SUPFAM" id="SSF81327">
    <property type="entry name" value="Small-conductance potassium channel"/>
    <property type="match status" value="1"/>
</dbReference>
<dbReference type="SUPFAM" id="SSF81324">
    <property type="entry name" value="Voltage-gated potassium channels"/>
    <property type="match status" value="1"/>
</dbReference>
<protein>
    <recommendedName>
        <fullName evidence="12">Small conductance calcium-activated potassium channel protein 1</fullName>
        <shortName evidence="11">SK1</shortName>
        <shortName>SKCa 1</shortName>
        <shortName>SKCa1</shortName>
    </recommendedName>
    <alternativeName>
        <fullName>KCa2.1</fullName>
    </alternativeName>
</protein>
<reference key="1">
    <citation type="journal article" date="2001" name="Biochim. Biophys. Acta">
        <title>Structure and complex transcription pattern of the mouse SK1 KCa channel gene, KCNN1.</title>
        <authorList>
            <person name="Shmukler B.E."/>
            <person name="Bond C.T."/>
            <person name="Wilhelm S."/>
            <person name="Bruening-Wright A."/>
            <person name="Maylie J."/>
            <person name="Adelman J.P."/>
            <person name="Alper S.L."/>
        </authorList>
    </citation>
    <scope>NUCLEOTIDE SEQUENCE [GENOMIC DNA / MRNA] (ISOFORM 2)</scope>
    <scope>NUCLEOTIDE SEQUENCE [MRNA] OF 1-131 (ISOFORM 1)</scope>
    <scope>ALTERNATIVE SPLICING</scope>
    <scope>INTERACTION WITH CALMODULIN</scope>
    <scope>POLYMORPHISM OF POLY-GLU REGION</scope>
    <scope>FUNCTION</scope>
    <source>
        <strain>CD-1</strain>
    </source>
</reference>
<reference key="2">
    <citation type="journal article" date="2001" name="Am. J. Physiol.">
        <title>Molecular properties of small-conductance Ca2+-activated K+ channels expressed in murine colonic smooth muscle.</title>
        <authorList>
            <person name="Ro S."/>
            <person name="Hatton W.J."/>
            <person name="Koh S.D."/>
            <person name="Horowitz B."/>
        </authorList>
    </citation>
    <scope>NUCLEOTIDE SEQUENCE [MRNA] (ISOFORM 1)</scope>
    <scope>FUNCTION</scope>
    <scope>TRANSPORTER ACTIVITY</scope>
    <scope>TISSUE SPECIFICITY</scope>
    <source>
        <strain>BALB/cJ</strain>
        <tissue>Colon</tissue>
    </source>
</reference>
<reference key="3">
    <citation type="journal article" date="2005" name="Am. J. Physiol.">
        <title>Differential expression of small-conductance Ca2+-activated K+ channels SK1, SK2, and SK3 in mouse atrial and ventricular myocytes.</title>
        <authorList>
            <person name="Tuteja D."/>
            <person name="Xu D."/>
            <person name="Timofeyev V."/>
            <person name="Lu L."/>
            <person name="Sharma D."/>
            <person name="Zhang Z."/>
            <person name="Xu Y."/>
            <person name="Nie L."/>
            <person name="Vazquez A.E."/>
            <person name="Young J.N."/>
            <person name="Glatter K.A."/>
            <person name="Chiamvimonvat N."/>
        </authorList>
    </citation>
    <scope>NUCLEOTIDE SEQUENCE [MRNA] (ISOFORM 1)</scope>
    <scope>TISSUE SPECIFICITY</scope>
    <source>
        <strain>CD-1</strain>
        <tissue>Heart</tissue>
    </source>
</reference>
<reference key="4">
    <citation type="journal article" date="2004" name="Genome Res.">
        <title>The status, quality, and expansion of the NIH full-length cDNA project: the Mammalian Gene Collection (MGC).</title>
        <authorList>
            <consortium name="The MGC Project Team"/>
        </authorList>
    </citation>
    <scope>NUCLEOTIDE SEQUENCE [LARGE SCALE MRNA] (ISOFORM 1)</scope>
    <scope>VARIANTS GLU-66 INS AND GLN-522</scope>
    <source>
        <strain>C57BL/6J</strain>
        <tissue>Brain</tissue>
    </source>
</reference>
<reference key="5">
    <citation type="journal article" date="2010" name="Circ. Res.">
        <title>Cardiac small conductance Ca2+-activated K+ channel subunits form heteromultimers via the coiled-coil domains in the C termini of the channels.</title>
        <authorList>
            <person name="Tuteja D."/>
            <person name="Rafizadeh S."/>
            <person name="Timofeyev V."/>
            <person name="Wang S."/>
            <person name="Zhang Z."/>
            <person name="Li N."/>
            <person name="Mateo R.K."/>
            <person name="Singapuri A."/>
            <person name="Young J.N."/>
            <person name="Knowlton A.A."/>
            <person name="Chiamvimonvat N."/>
        </authorList>
    </citation>
    <scope>SUBUNIT</scope>
    <scope>SUBCELLULAR LOCATION</scope>
    <scope>TISSUE SPECIFICITY</scope>
</reference>